<accession>P75683</accession>
<accession>P71292</accession>
<accession>Q2MCF2</accession>
<proteinExistence type="evidence at protein level"/>
<organism>
    <name type="scientific">Escherichia coli (strain K12)</name>
    <dbReference type="NCBI Taxonomy" id="83333"/>
    <lineage>
        <taxon>Bacteria</taxon>
        <taxon>Pseudomonadati</taxon>
        <taxon>Pseudomonadota</taxon>
        <taxon>Gammaproteobacteria</taxon>
        <taxon>Enterobacterales</taxon>
        <taxon>Enterobacteriaceae</taxon>
        <taxon>Escherichia</taxon>
    </lineage>
</organism>
<protein>
    <recommendedName>
        <fullName>Putative glycoside/cation symporter YagG</fullName>
    </recommendedName>
</protein>
<sequence>MTQLTMKDKIGYGLGDTACGFVWQATMFLLAYFYTDVFGLSAGIMGTLFLVSRVLDAVTDPLMGLLVDRTRTRHGQFRPFLLWGAIPFGIVCVLTFYTPDFSAQGKIIYACVTYILLTLVYTFVNVPYCAMPGVITADPKERHALQSWRFFLAAAGSLAISGIALPLVSIIGKGDEQVGYFGAMCVLGLSGVVLLYVCFFTTKERYTFEVQPGSSVAKDLKLLLGNSQWRIMCAFKMMATCSNVVRGGATLYFVKYVMDHPELATQFLLYGSLATMFGSLCSSRLLGRFDRVTAFKWIIVAYSLISLLIFVTPAEHIALIFALNILFLFVFNTTTPLQWLMASDVVDYEESRSGRRLDGLVFSTYLFSLKIGLAIGGAVVGWILAYVNYSASSSVQPVEVLTTIKILFCVVPVVLYAGMFIMLSLYKLTDARVEAISRQLIKHRAAQGEAVPDAATAASH</sequence>
<evidence type="ECO:0000255" key="1"/>
<evidence type="ECO:0000269" key="2">
    <source>
    </source>
</evidence>
<evidence type="ECO:0000305" key="3"/>
<evidence type="ECO:0000305" key="4">
    <source>
    </source>
</evidence>
<name>YAGG_ECOLI</name>
<reference key="1">
    <citation type="submission" date="1997-01" db="EMBL/GenBank/DDBJ databases">
        <title>Sequence of minutes 4-25 of Escherichia coli.</title>
        <authorList>
            <person name="Chung E."/>
            <person name="Allen E."/>
            <person name="Araujo R."/>
            <person name="Aparicio A.M."/>
            <person name="Davis K."/>
            <person name="Duncan M."/>
            <person name="Federspiel N."/>
            <person name="Hyman R."/>
            <person name="Kalman S."/>
            <person name="Komp C."/>
            <person name="Kurdi O."/>
            <person name="Lew H."/>
            <person name="Lin D."/>
            <person name="Namath A."/>
            <person name="Oefner P."/>
            <person name="Roberts D."/>
            <person name="Schramm S."/>
            <person name="Davis R.W."/>
        </authorList>
    </citation>
    <scope>NUCLEOTIDE SEQUENCE [LARGE SCALE GENOMIC DNA]</scope>
    <source>
        <strain>K12 / MG1655 / ATCC 47076</strain>
    </source>
</reference>
<reference key="2">
    <citation type="journal article" date="1997" name="Science">
        <title>The complete genome sequence of Escherichia coli K-12.</title>
        <authorList>
            <person name="Blattner F.R."/>
            <person name="Plunkett G. III"/>
            <person name="Bloch C.A."/>
            <person name="Perna N.T."/>
            <person name="Burland V."/>
            <person name="Riley M."/>
            <person name="Collado-Vides J."/>
            <person name="Glasner J.D."/>
            <person name="Rode C.K."/>
            <person name="Mayhew G.F."/>
            <person name="Gregor J."/>
            <person name="Davis N.W."/>
            <person name="Kirkpatrick H.A."/>
            <person name="Goeden M.A."/>
            <person name="Rose D.J."/>
            <person name="Mau B."/>
            <person name="Shao Y."/>
        </authorList>
    </citation>
    <scope>NUCLEOTIDE SEQUENCE [LARGE SCALE GENOMIC DNA]</scope>
    <source>
        <strain>K12 / MG1655 / ATCC 47076</strain>
    </source>
</reference>
<reference key="3">
    <citation type="journal article" date="2006" name="Mol. Syst. Biol.">
        <title>Highly accurate genome sequences of Escherichia coli K-12 strains MG1655 and W3110.</title>
        <authorList>
            <person name="Hayashi K."/>
            <person name="Morooka N."/>
            <person name="Yamamoto Y."/>
            <person name="Fujita K."/>
            <person name="Isono K."/>
            <person name="Choi S."/>
            <person name="Ohtsubo E."/>
            <person name="Baba T."/>
            <person name="Wanner B.L."/>
            <person name="Mori H."/>
            <person name="Horiuchi T."/>
        </authorList>
    </citation>
    <scope>NUCLEOTIDE SEQUENCE [LARGE SCALE GENOMIC DNA]</scope>
    <source>
        <strain>K12 / W3110 / ATCC 27325 / DSM 5911</strain>
    </source>
</reference>
<reference key="4">
    <citation type="journal article" date="2005" name="Science">
        <title>Global topology analysis of the Escherichia coli inner membrane proteome.</title>
        <authorList>
            <person name="Daley D.O."/>
            <person name="Rapp M."/>
            <person name="Granseth E."/>
            <person name="Melen K."/>
            <person name="Drew D."/>
            <person name="von Heijne G."/>
        </authorList>
    </citation>
    <scope>SUBCELLULAR LOCATION</scope>
    <scope>TOPOLOGY [LARGE SCALE ANALYSIS]</scope>
    <source>
        <strain>K12 / MG1655 / ATCC 47076</strain>
    </source>
</reference>
<keyword id="KW-0997">Cell inner membrane</keyword>
<keyword id="KW-1003">Cell membrane</keyword>
<keyword id="KW-0472">Membrane</keyword>
<keyword id="KW-1185">Reference proteome</keyword>
<keyword id="KW-0769">Symport</keyword>
<keyword id="KW-0812">Transmembrane</keyword>
<keyword id="KW-1133">Transmembrane helix</keyword>
<keyword id="KW-0813">Transport</keyword>
<gene>
    <name type="primary">yagG</name>
    <name type="ordered locus">b0270</name>
    <name type="ordered locus">JW0263</name>
</gene>
<feature type="chain" id="PRO_0000170765" description="Putative glycoside/cation symporter YagG">
    <location>
        <begin position="1"/>
        <end position="460"/>
    </location>
</feature>
<feature type="topological domain" description="Cytoplasmic" evidence="3">
    <location>
        <begin position="1"/>
        <end position="9"/>
    </location>
</feature>
<feature type="transmembrane region" description="Helical" evidence="1">
    <location>
        <begin position="10"/>
        <end position="30"/>
    </location>
</feature>
<feature type="transmembrane region" description="Helical" evidence="1">
    <location>
        <begin position="31"/>
        <end position="51"/>
    </location>
</feature>
<feature type="topological domain" description="Cytoplasmic" evidence="3">
    <location>
        <begin position="52"/>
        <end position="78"/>
    </location>
</feature>
<feature type="transmembrane region" description="Helical" evidence="1">
    <location>
        <begin position="79"/>
        <end position="99"/>
    </location>
</feature>
<feature type="topological domain" description="Periplasmic" evidence="3">
    <location>
        <begin position="100"/>
        <end position="106"/>
    </location>
</feature>
<feature type="transmembrane region" description="Helical" evidence="1">
    <location>
        <begin position="107"/>
        <end position="127"/>
    </location>
</feature>
<feature type="topological domain" description="Cytoplasmic" evidence="3">
    <location>
        <begin position="128"/>
        <end position="150"/>
    </location>
</feature>
<feature type="transmembrane region" description="Helical" evidence="1">
    <location>
        <begin position="151"/>
        <end position="171"/>
    </location>
</feature>
<feature type="topological domain" description="Periplasmic" evidence="3">
    <location>
        <begin position="172"/>
        <end position="179"/>
    </location>
</feature>
<feature type="transmembrane region" description="Helical" evidence="1">
    <location>
        <begin position="180"/>
        <end position="200"/>
    </location>
</feature>
<feature type="topological domain" description="Cytoplasmic" evidence="3">
    <location>
        <begin position="201"/>
        <end position="262"/>
    </location>
</feature>
<feature type="transmembrane region" description="Helical" evidence="1">
    <location>
        <begin position="263"/>
        <end position="283"/>
    </location>
</feature>
<feature type="topological domain" description="Periplasmic" evidence="3">
    <location>
        <begin position="284"/>
        <end position="308"/>
    </location>
</feature>
<feature type="transmembrane region" description="Helical" evidence="1">
    <location>
        <begin position="309"/>
        <end position="329"/>
    </location>
</feature>
<feature type="topological domain" description="Cytoplasmic" evidence="3">
    <location>
        <begin position="330"/>
        <end position="366"/>
    </location>
</feature>
<feature type="transmembrane region" description="Helical" evidence="1">
    <location>
        <begin position="367"/>
        <end position="387"/>
    </location>
</feature>
<feature type="topological domain" description="Periplasmic" evidence="3">
    <location>
        <begin position="388"/>
        <end position="405"/>
    </location>
</feature>
<feature type="transmembrane region" description="Helical" evidence="1">
    <location>
        <begin position="406"/>
        <end position="426"/>
    </location>
</feature>
<feature type="topological domain" description="Cytoplasmic" evidence="2 3">
    <location>
        <begin position="427"/>
        <end position="460"/>
    </location>
</feature>
<feature type="sequence conflict" description="In Ref. 1; AAB08691." evidence="3" ref="1">
    <original>K</original>
    <variation>N</variation>
    <location>
        <position position="370"/>
    </location>
</feature>
<dbReference type="EMBL" id="U70214">
    <property type="protein sequence ID" value="AAB08691.1"/>
    <property type="molecule type" value="Genomic_DNA"/>
</dbReference>
<dbReference type="EMBL" id="U00096">
    <property type="protein sequence ID" value="AAC73373.1"/>
    <property type="molecule type" value="Genomic_DNA"/>
</dbReference>
<dbReference type="EMBL" id="AP009048">
    <property type="protein sequence ID" value="BAE76054.1"/>
    <property type="molecule type" value="Genomic_DNA"/>
</dbReference>
<dbReference type="PIR" id="F64752">
    <property type="entry name" value="F64752"/>
</dbReference>
<dbReference type="RefSeq" id="NP_414804.1">
    <property type="nucleotide sequence ID" value="NC_000913.3"/>
</dbReference>
<dbReference type="RefSeq" id="WP_000192863.1">
    <property type="nucleotide sequence ID" value="NZ_LN832404.1"/>
</dbReference>
<dbReference type="SMR" id="P75683"/>
<dbReference type="BioGRID" id="4261987">
    <property type="interactions" value="193"/>
</dbReference>
<dbReference type="DIP" id="DIP-11234N"/>
<dbReference type="FunCoup" id="P75683">
    <property type="interactions" value="181"/>
</dbReference>
<dbReference type="IntAct" id="P75683">
    <property type="interactions" value="2"/>
</dbReference>
<dbReference type="STRING" id="511145.b0270"/>
<dbReference type="TCDB" id="2.A.2.3.5">
    <property type="family name" value="the glycoside-pentoside-hexuronide (gph):cation symporter family"/>
</dbReference>
<dbReference type="PaxDb" id="511145-b0270"/>
<dbReference type="EnsemblBacteria" id="AAC73373">
    <property type="protein sequence ID" value="AAC73373"/>
    <property type="gene ID" value="b0270"/>
</dbReference>
<dbReference type="GeneID" id="944947"/>
<dbReference type="KEGG" id="ecj:JW0263"/>
<dbReference type="KEGG" id="eco:b0270"/>
<dbReference type="KEGG" id="ecoc:C3026_01310"/>
<dbReference type="PATRIC" id="fig|1411691.4.peg.2010"/>
<dbReference type="EchoBASE" id="EB3130"/>
<dbReference type="eggNOG" id="COG2211">
    <property type="taxonomic scope" value="Bacteria"/>
</dbReference>
<dbReference type="HOGENOM" id="CLU_027408_0_2_6"/>
<dbReference type="InParanoid" id="P75683"/>
<dbReference type="OMA" id="IPYWSWL"/>
<dbReference type="OrthoDB" id="181905at2"/>
<dbReference type="PhylomeDB" id="P75683"/>
<dbReference type="BioCyc" id="EcoCyc:B0270-MONOMER"/>
<dbReference type="PRO" id="PR:P75683"/>
<dbReference type="Proteomes" id="UP000000625">
    <property type="component" value="Chromosome"/>
</dbReference>
<dbReference type="GO" id="GO:0005886">
    <property type="term" value="C:plasma membrane"/>
    <property type="evidence" value="ECO:0000314"/>
    <property type="project" value="EcoCyc"/>
</dbReference>
<dbReference type="GO" id="GO:0015293">
    <property type="term" value="F:symporter activity"/>
    <property type="evidence" value="ECO:0007669"/>
    <property type="project" value="UniProtKB-KW"/>
</dbReference>
<dbReference type="GO" id="GO:0008643">
    <property type="term" value="P:carbohydrate transport"/>
    <property type="evidence" value="ECO:0007669"/>
    <property type="project" value="InterPro"/>
</dbReference>
<dbReference type="GO" id="GO:0006814">
    <property type="term" value="P:sodium ion transport"/>
    <property type="evidence" value="ECO:0007669"/>
    <property type="project" value="InterPro"/>
</dbReference>
<dbReference type="GO" id="GO:0055085">
    <property type="term" value="P:transmembrane transport"/>
    <property type="evidence" value="ECO:0000318"/>
    <property type="project" value="GO_Central"/>
</dbReference>
<dbReference type="CDD" id="cd17332">
    <property type="entry name" value="MFS_MelB_like"/>
    <property type="match status" value="1"/>
</dbReference>
<dbReference type="FunFam" id="1.20.1250.20:FF:000734">
    <property type="entry name" value="Sugar (Glycoside-Pentoside-Hexuronide) transporter"/>
    <property type="match status" value="1"/>
</dbReference>
<dbReference type="FunFam" id="1.20.1250.20:FF:000877">
    <property type="entry name" value="Sugar (Glycoside-Pentoside-Hexuronide) transporter"/>
    <property type="match status" value="1"/>
</dbReference>
<dbReference type="Gene3D" id="1.20.1250.20">
    <property type="entry name" value="MFS general substrate transporter like domains"/>
    <property type="match status" value="2"/>
</dbReference>
<dbReference type="InterPro" id="IPR039672">
    <property type="entry name" value="MFS_2"/>
</dbReference>
<dbReference type="InterPro" id="IPR036259">
    <property type="entry name" value="MFS_trans_sf"/>
</dbReference>
<dbReference type="InterPro" id="IPR001927">
    <property type="entry name" value="Na/Gal_symport"/>
</dbReference>
<dbReference type="InterPro" id="IPR018043">
    <property type="entry name" value="Na/Gal_symport_CS"/>
</dbReference>
<dbReference type="NCBIfam" id="TIGR00792">
    <property type="entry name" value="gph"/>
    <property type="match status" value="1"/>
</dbReference>
<dbReference type="NCBIfam" id="NF007237">
    <property type="entry name" value="PRK09669.1"/>
    <property type="match status" value="1"/>
</dbReference>
<dbReference type="PANTHER" id="PTHR11328:SF24">
    <property type="entry name" value="MAJOR FACILITATOR SUPERFAMILY (MFS) PROFILE DOMAIN-CONTAINING PROTEIN"/>
    <property type="match status" value="1"/>
</dbReference>
<dbReference type="PANTHER" id="PTHR11328">
    <property type="entry name" value="MAJOR FACILITATOR SUPERFAMILY DOMAIN-CONTAINING PROTEIN"/>
    <property type="match status" value="1"/>
</dbReference>
<dbReference type="Pfam" id="PF13347">
    <property type="entry name" value="MFS_2"/>
    <property type="match status" value="1"/>
</dbReference>
<dbReference type="SUPFAM" id="SSF103473">
    <property type="entry name" value="MFS general substrate transporter"/>
    <property type="match status" value="1"/>
</dbReference>
<dbReference type="PROSITE" id="PS00872">
    <property type="entry name" value="NA_GALACTOSIDE_SYMP"/>
    <property type="match status" value="1"/>
</dbReference>
<comment type="subcellular location">
    <subcellularLocation>
        <location evidence="2">Cell inner membrane</location>
        <topology evidence="4">Multi-pass membrane protein</topology>
    </subcellularLocation>
</comment>
<comment type="similarity">
    <text evidence="3">Belongs to the sodium:galactoside symporter (TC 2.A.2) family.</text>
</comment>